<feature type="chain" id="PRO_0000057330" description="tRNA pseudouridine synthase A 2">
    <location>
        <begin position="1"/>
        <end position="245"/>
    </location>
</feature>
<feature type="active site" description="Nucleophile" evidence="1">
    <location>
        <position position="53"/>
    </location>
</feature>
<feature type="binding site" evidence="1">
    <location>
        <position position="111"/>
    </location>
    <ligand>
        <name>substrate</name>
    </ligand>
</feature>
<dbReference type="EC" id="5.4.99.12" evidence="1"/>
<dbReference type="EMBL" id="AE017355">
    <property type="protein sequence ID" value="AAT59021.1"/>
    <property type="molecule type" value="Genomic_DNA"/>
</dbReference>
<dbReference type="RefSeq" id="YP_034755.1">
    <property type="nucleotide sequence ID" value="NC_005957.1"/>
</dbReference>
<dbReference type="SMR" id="Q6HNW5"/>
<dbReference type="KEGG" id="btk:BT9727_0405"/>
<dbReference type="PATRIC" id="fig|281309.8.peg.429"/>
<dbReference type="HOGENOM" id="CLU_014673_0_1_9"/>
<dbReference type="Proteomes" id="UP000001301">
    <property type="component" value="Chromosome"/>
</dbReference>
<dbReference type="GO" id="GO:0003723">
    <property type="term" value="F:RNA binding"/>
    <property type="evidence" value="ECO:0007669"/>
    <property type="project" value="InterPro"/>
</dbReference>
<dbReference type="GO" id="GO:0160147">
    <property type="term" value="F:tRNA pseudouridine(38-40) synthase activity"/>
    <property type="evidence" value="ECO:0007669"/>
    <property type="project" value="UniProtKB-EC"/>
</dbReference>
<dbReference type="GO" id="GO:0031119">
    <property type="term" value="P:tRNA pseudouridine synthesis"/>
    <property type="evidence" value="ECO:0007669"/>
    <property type="project" value="UniProtKB-UniRule"/>
</dbReference>
<dbReference type="CDD" id="cd02570">
    <property type="entry name" value="PseudoU_synth_EcTruA"/>
    <property type="match status" value="1"/>
</dbReference>
<dbReference type="FunFam" id="3.30.70.580:FF:000001">
    <property type="entry name" value="tRNA pseudouridine synthase A"/>
    <property type="match status" value="1"/>
</dbReference>
<dbReference type="Gene3D" id="3.30.70.660">
    <property type="entry name" value="Pseudouridine synthase I, catalytic domain, C-terminal subdomain"/>
    <property type="match status" value="1"/>
</dbReference>
<dbReference type="Gene3D" id="3.30.70.580">
    <property type="entry name" value="Pseudouridine synthase I, catalytic domain, N-terminal subdomain"/>
    <property type="match status" value="1"/>
</dbReference>
<dbReference type="HAMAP" id="MF_00171">
    <property type="entry name" value="TruA"/>
    <property type="match status" value="1"/>
</dbReference>
<dbReference type="InterPro" id="IPR020103">
    <property type="entry name" value="PsdUridine_synth_cat_dom_sf"/>
</dbReference>
<dbReference type="InterPro" id="IPR001406">
    <property type="entry name" value="PsdUridine_synth_TruA"/>
</dbReference>
<dbReference type="InterPro" id="IPR020097">
    <property type="entry name" value="PsdUridine_synth_TruA_a/b_dom"/>
</dbReference>
<dbReference type="InterPro" id="IPR020095">
    <property type="entry name" value="PsdUridine_synth_TruA_C"/>
</dbReference>
<dbReference type="InterPro" id="IPR020094">
    <property type="entry name" value="TruA/RsuA/RluB/E/F_N"/>
</dbReference>
<dbReference type="NCBIfam" id="TIGR00071">
    <property type="entry name" value="hisT_truA"/>
    <property type="match status" value="1"/>
</dbReference>
<dbReference type="PANTHER" id="PTHR11142">
    <property type="entry name" value="PSEUDOURIDYLATE SYNTHASE"/>
    <property type="match status" value="1"/>
</dbReference>
<dbReference type="PANTHER" id="PTHR11142:SF22">
    <property type="entry name" value="TRNA PSEUDOURIDINE SYNTHASE A 2"/>
    <property type="match status" value="1"/>
</dbReference>
<dbReference type="Pfam" id="PF01416">
    <property type="entry name" value="PseudoU_synth_1"/>
    <property type="match status" value="2"/>
</dbReference>
<dbReference type="PIRSF" id="PIRSF001430">
    <property type="entry name" value="tRNA_psdUrid_synth"/>
    <property type="match status" value="1"/>
</dbReference>
<dbReference type="SUPFAM" id="SSF55120">
    <property type="entry name" value="Pseudouridine synthase"/>
    <property type="match status" value="1"/>
</dbReference>
<keyword id="KW-0413">Isomerase</keyword>
<keyword id="KW-0819">tRNA processing</keyword>
<sequence>MNNYKLTIQYDGARFKGWQRLGNNDNTIQGKIESVISEMVGKETEIIGCSRTDAGVHALNQVANFQSDEKLVEHKVKKYLNQYLPNDISITNVEEVHNRFHARYNSKVKTYLYKIWNEEHTNPFMRKYSMHVNKKLNVKSMKEAAKHLVGSHDFTAFSNAKSKKKSMVREVYSLEVMEEAGFVQIRVSGNGFLHNMVRKIVGALIEVGLGQLAAEAIPQILEAKQRNQINCLAEASGLYLENVEF</sequence>
<protein>
    <recommendedName>
        <fullName evidence="1">tRNA pseudouridine synthase A 2</fullName>
        <ecNumber evidence="1">5.4.99.12</ecNumber>
    </recommendedName>
    <alternativeName>
        <fullName evidence="1">tRNA pseudouridine(38-40) synthase</fullName>
    </alternativeName>
    <alternativeName>
        <fullName evidence="1">tRNA pseudouridylate synthase I 2</fullName>
    </alternativeName>
    <alternativeName>
        <fullName evidence="1">tRNA-uridine isomerase I 2</fullName>
    </alternativeName>
</protein>
<name>TRUA2_BACHK</name>
<organism>
    <name type="scientific">Bacillus thuringiensis subsp. konkukian (strain 97-27)</name>
    <dbReference type="NCBI Taxonomy" id="281309"/>
    <lineage>
        <taxon>Bacteria</taxon>
        <taxon>Bacillati</taxon>
        <taxon>Bacillota</taxon>
        <taxon>Bacilli</taxon>
        <taxon>Bacillales</taxon>
        <taxon>Bacillaceae</taxon>
        <taxon>Bacillus</taxon>
        <taxon>Bacillus cereus group</taxon>
    </lineage>
</organism>
<gene>
    <name evidence="1" type="primary">truA2</name>
    <name type="ordered locus">BT9727_0405</name>
</gene>
<proteinExistence type="inferred from homology"/>
<evidence type="ECO:0000255" key="1">
    <source>
        <dbReference type="HAMAP-Rule" id="MF_00171"/>
    </source>
</evidence>
<reference key="1">
    <citation type="journal article" date="2006" name="J. Bacteriol.">
        <title>Pathogenomic sequence analysis of Bacillus cereus and Bacillus thuringiensis isolates closely related to Bacillus anthracis.</title>
        <authorList>
            <person name="Han C.S."/>
            <person name="Xie G."/>
            <person name="Challacombe J.F."/>
            <person name="Altherr M.R."/>
            <person name="Bhotika S.S."/>
            <person name="Bruce D."/>
            <person name="Campbell C.S."/>
            <person name="Campbell M.L."/>
            <person name="Chen J."/>
            <person name="Chertkov O."/>
            <person name="Cleland C."/>
            <person name="Dimitrijevic M."/>
            <person name="Doggett N.A."/>
            <person name="Fawcett J.J."/>
            <person name="Glavina T."/>
            <person name="Goodwin L.A."/>
            <person name="Hill K.K."/>
            <person name="Hitchcock P."/>
            <person name="Jackson P.J."/>
            <person name="Keim P."/>
            <person name="Kewalramani A.R."/>
            <person name="Longmire J."/>
            <person name="Lucas S."/>
            <person name="Malfatti S."/>
            <person name="McMurry K."/>
            <person name="Meincke L.J."/>
            <person name="Misra M."/>
            <person name="Moseman B.L."/>
            <person name="Mundt M."/>
            <person name="Munk A.C."/>
            <person name="Okinaka R.T."/>
            <person name="Parson-Quintana B."/>
            <person name="Reilly L.P."/>
            <person name="Richardson P."/>
            <person name="Robinson D.L."/>
            <person name="Rubin E."/>
            <person name="Saunders E."/>
            <person name="Tapia R."/>
            <person name="Tesmer J.G."/>
            <person name="Thayer N."/>
            <person name="Thompson L.S."/>
            <person name="Tice H."/>
            <person name="Ticknor L.O."/>
            <person name="Wills P.L."/>
            <person name="Brettin T.S."/>
            <person name="Gilna P."/>
        </authorList>
    </citation>
    <scope>NUCLEOTIDE SEQUENCE [LARGE SCALE GENOMIC DNA]</scope>
    <source>
        <strain>97-27</strain>
    </source>
</reference>
<accession>Q6HNW5</accession>
<comment type="function">
    <text evidence="1">Formation of pseudouridine at positions 38, 39 and 40 in the anticodon stem and loop of transfer RNAs.</text>
</comment>
<comment type="catalytic activity">
    <reaction evidence="1">
        <text>uridine(38/39/40) in tRNA = pseudouridine(38/39/40) in tRNA</text>
        <dbReference type="Rhea" id="RHEA:22376"/>
        <dbReference type="Rhea" id="RHEA-COMP:10085"/>
        <dbReference type="Rhea" id="RHEA-COMP:10087"/>
        <dbReference type="ChEBI" id="CHEBI:65314"/>
        <dbReference type="ChEBI" id="CHEBI:65315"/>
        <dbReference type="EC" id="5.4.99.12"/>
    </reaction>
</comment>
<comment type="subunit">
    <text evidence="1">Homodimer.</text>
</comment>
<comment type="similarity">
    <text evidence="1">Belongs to the tRNA pseudouridine synthase TruA family.</text>
</comment>